<reference key="1">
    <citation type="journal article" date="2001" name="Science">
        <title>Comparative genomics of Listeria species.</title>
        <authorList>
            <person name="Glaser P."/>
            <person name="Frangeul L."/>
            <person name="Buchrieser C."/>
            <person name="Rusniok C."/>
            <person name="Amend A."/>
            <person name="Baquero F."/>
            <person name="Berche P."/>
            <person name="Bloecker H."/>
            <person name="Brandt P."/>
            <person name="Chakraborty T."/>
            <person name="Charbit A."/>
            <person name="Chetouani F."/>
            <person name="Couve E."/>
            <person name="de Daruvar A."/>
            <person name="Dehoux P."/>
            <person name="Domann E."/>
            <person name="Dominguez-Bernal G."/>
            <person name="Duchaud E."/>
            <person name="Durant L."/>
            <person name="Dussurget O."/>
            <person name="Entian K.-D."/>
            <person name="Fsihi H."/>
            <person name="Garcia-del Portillo F."/>
            <person name="Garrido P."/>
            <person name="Gautier L."/>
            <person name="Goebel W."/>
            <person name="Gomez-Lopez N."/>
            <person name="Hain T."/>
            <person name="Hauf J."/>
            <person name="Jackson D."/>
            <person name="Jones L.-M."/>
            <person name="Kaerst U."/>
            <person name="Kreft J."/>
            <person name="Kuhn M."/>
            <person name="Kunst F."/>
            <person name="Kurapkat G."/>
            <person name="Madueno E."/>
            <person name="Maitournam A."/>
            <person name="Mata Vicente J."/>
            <person name="Ng E."/>
            <person name="Nedjari H."/>
            <person name="Nordsiek G."/>
            <person name="Novella S."/>
            <person name="de Pablos B."/>
            <person name="Perez-Diaz J.-C."/>
            <person name="Purcell R."/>
            <person name="Remmel B."/>
            <person name="Rose M."/>
            <person name="Schlueter T."/>
            <person name="Simoes N."/>
            <person name="Tierrez A."/>
            <person name="Vazquez-Boland J.-A."/>
            <person name="Voss H."/>
            <person name="Wehland J."/>
            <person name="Cossart P."/>
        </authorList>
    </citation>
    <scope>NUCLEOTIDE SEQUENCE [LARGE SCALE GENOMIC DNA]</scope>
    <source>
        <strain>ATCC BAA-680 / CLIP 11262</strain>
    </source>
</reference>
<reference key="2">
    <citation type="journal article" date="2004" name="Proc. Natl. Acad. Sci. U.S.A.">
        <title>Listeria monocytogenes regulates flagellar motility gene expression through MogR, a transcriptional repressor required for virulence.</title>
        <authorList>
            <person name="Gruendling A."/>
            <person name="Burrack L.S."/>
            <person name="Bouwer H.G.A."/>
            <person name="Higgins D.E."/>
        </authorList>
    </citation>
    <scope>FUNCTION</scope>
    <source>
        <strain>ATCC BAA-680 / CLIP 11262</strain>
    </source>
</reference>
<keyword id="KW-0963">Cytoplasm</keyword>
<keyword id="KW-0238">DNA-binding</keyword>
<keyword id="KW-0678">Repressor</keyword>
<keyword id="KW-0804">Transcription</keyword>
<keyword id="KW-0805">Transcription regulation</keyword>
<protein>
    <recommendedName>
        <fullName>Motility gene repressor MogR</fullName>
    </recommendedName>
</protein>
<evidence type="ECO:0000250" key="1"/>
<evidence type="ECO:0000305" key="2">
    <source>
    </source>
</evidence>
<feature type="chain" id="PRO_0000247904" description="Motility gene repressor MogR">
    <location>
        <begin position="1"/>
        <end position="306"/>
    </location>
</feature>
<proteinExistence type="inferred from homology"/>
<accession>Q92DX9</accession>
<sequence>MPKSEIRKLLQEIKKQVDEPGNSSATEIKKMASEAGINEQTAEEIYQLLTEFYQAVEEHGGIEKYMHSNISWLKIELELLSACYQIAILEDMKVLDISEMLSLNDLRIFPKTPSQLQNTYYKLKKELIQVEDIPKYKPGRKRKTQKNTKKEKTNIFGKVVPAEFKAPTSIKEQISYDKSREKNLVDLLSGVKSNVQLLSENQGEENNVYDLLKSIYSLSSLAVQKEELDKKYQDLQTKYQELEQENSYLKQQNETMTDSFHTLVLQVADFAYASDLDQIQALPLFSQQLVVTLNQLGVFKENYKQM</sequence>
<name>MOGR_LISIN</name>
<comment type="function">
    <text evidence="2">Transcriptional repressor of flagellar motility genes, such as flaA, during extracellular growth at 37 degrees Celsius. Binds directly to gene promoter region and probably prevents RNA polymerase binding. At low temperatures, MogR repression activity is modulated by the DegU response regulator in an unknown mechanism (Probable).</text>
</comment>
<comment type="subcellular location">
    <subcellularLocation>
        <location evidence="1">Cytoplasm</location>
    </subcellularLocation>
</comment>
<dbReference type="EMBL" id="AL596166">
    <property type="protein sequence ID" value="CAC95914.1"/>
    <property type="molecule type" value="Genomic_DNA"/>
</dbReference>
<dbReference type="PIR" id="AB1518">
    <property type="entry name" value="AB1518"/>
</dbReference>
<dbReference type="RefSeq" id="WP_010990555.1">
    <property type="nucleotide sequence ID" value="NC_003212.1"/>
</dbReference>
<dbReference type="SMR" id="Q92DX9"/>
<dbReference type="STRING" id="272626.gene:17565009"/>
<dbReference type="KEGG" id="lin:lin0682"/>
<dbReference type="eggNOG" id="ENOG50340G0">
    <property type="taxonomic scope" value="Bacteria"/>
</dbReference>
<dbReference type="HOGENOM" id="CLU_080650_0_0_9"/>
<dbReference type="OrthoDB" id="2364120at2"/>
<dbReference type="Proteomes" id="UP000002513">
    <property type="component" value="Chromosome"/>
</dbReference>
<dbReference type="GO" id="GO:0005737">
    <property type="term" value="C:cytoplasm"/>
    <property type="evidence" value="ECO:0007669"/>
    <property type="project" value="UniProtKB-SubCell"/>
</dbReference>
<dbReference type="GO" id="GO:0003677">
    <property type="term" value="F:DNA binding"/>
    <property type="evidence" value="ECO:0007669"/>
    <property type="project" value="UniProtKB-KW"/>
</dbReference>
<dbReference type="Gene3D" id="1.20.120.1030">
    <property type="entry name" value="Motility repressor MogR, DNA-binding domain"/>
    <property type="match status" value="1"/>
</dbReference>
<dbReference type="InterPro" id="IPR021009">
    <property type="entry name" value="MogR_DNA-bd"/>
</dbReference>
<dbReference type="InterPro" id="IPR038245">
    <property type="entry name" value="MogR_DNA-bd_sf"/>
</dbReference>
<dbReference type="Pfam" id="PF12181">
    <property type="entry name" value="MogR_DNAbind"/>
    <property type="match status" value="1"/>
</dbReference>
<organism>
    <name type="scientific">Listeria innocua serovar 6a (strain ATCC BAA-680 / CLIP 11262)</name>
    <dbReference type="NCBI Taxonomy" id="272626"/>
    <lineage>
        <taxon>Bacteria</taxon>
        <taxon>Bacillati</taxon>
        <taxon>Bacillota</taxon>
        <taxon>Bacilli</taxon>
        <taxon>Bacillales</taxon>
        <taxon>Listeriaceae</taxon>
        <taxon>Listeria</taxon>
    </lineage>
</organism>
<gene>
    <name type="primary">mogR</name>
    <name type="ordered locus">lin0682</name>
</gene>